<keyword id="KW-0997">Cell inner membrane</keyword>
<keyword id="KW-1003">Cell membrane</keyword>
<keyword id="KW-0472">Membrane</keyword>
<keyword id="KW-0812">Transmembrane</keyword>
<keyword id="KW-1133">Transmembrane helix</keyword>
<feature type="chain" id="PRO_1000203987" description="Inner membrane-spanning protein YciB">
    <location>
        <begin position="1"/>
        <end position="188"/>
    </location>
</feature>
<feature type="transmembrane region" description="Helical" evidence="1">
    <location>
        <begin position="22"/>
        <end position="42"/>
    </location>
</feature>
<feature type="transmembrane region" description="Helical" evidence="1">
    <location>
        <begin position="50"/>
        <end position="70"/>
    </location>
</feature>
<feature type="transmembrane region" description="Helical" evidence="1">
    <location>
        <begin position="72"/>
        <end position="92"/>
    </location>
</feature>
<feature type="transmembrane region" description="Helical" evidence="1">
    <location>
        <begin position="121"/>
        <end position="141"/>
    </location>
</feature>
<feature type="transmembrane region" description="Helical" evidence="1">
    <location>
        <begin position="149"/>
        <end position="169"/>
    </location>
</feature>
<protein>
    <recommendedName>
        <fullName evidence="1">Inner membrane-spanning protein YciB</fullName>
    </recommendedName>
</protein>
<name>YCIB_PECCP</name>
<proteinExistence type="inferred from homology"/>
<organism>
    <name type="scientific">Pectobacterium carotovorum subsp. carotovorum (strain PC1)</name>
    <dbReference type="NCBI Taxonomy" id="561230"/>
    <lineage>
        <taxon>Bacteria</taxon>
        <taxon>Pseudomonadati</taxon>
        <taxon>Pseudomonadota</taxon>
        <taxon>Gammaproteobacteria</taxon>
        <taxon>Enterobacterales</taxon>
        <taxon>Pectobacteriaceae</taxon>
        <taxon>Pectobacterium</taxon>
    </lineage>
</organism>
<sequence>MKQLLDFIPLVVFFAAYKLYDIYIASGALIAATALSLAVTWMMYRKIEKMTLVTFAMVVVFGSLTLVFHNDLFIKWKVTIIYALFAVALLVSQFVMKQTLIQKMLGKELTLPQSVWGKLNFAWAMFFLVCGLVNIYIAFWLPQSVWVNFKVFGLTGVTLLFTLICGVYIYRHLPGDQEKPEEEKSEQP</sequence>
<dbReference type="EMBL" id="CP001657">
    <property type="protein sequence ID" value="ACT13038.1"/>
    <property type="molecule type" value="Genomic_DNA"/>
</dbReference>
<dbReference type="RefSeq" id="WP_015840231.1">
    <property type="nucleotide sequence ID" value="NC_012917.1"/>
</dbReference>
<dbReference type="STRING" id="561230.PC1_1997"/>
<dbReference type="KEGG" id="pct:PC1_1997"/>
<dbReference type="eggNOG" id="COG2917">
    <property type="taxonomic scope" value="Bacteria"/>
</dbReference>
<dbReference type="HOGENOM" id="CLU_089554_2_0_6"/>
<dbReference type="OrthoDB" id="9788219at2"/>
<dbReference type="Proteomes" id="UP000002736">
    <property type="component" value="Chromosome"/>
</dbReference>
<dbReference type="GO" id="GO:0005886">
    <property type="term" value="C:plasma membrane"/>
    <property type="evidence" value="ECO:0007669"/>
    <property type="project" value="UniProtKB-SubCell"/>
</dbReference>
<dbReference type="HAMAP" id="MF_00189">
    <property type="entry name" value="YciB"/>
    <property type="match status" value="1"/>
</dbReference>
<dbReference type="InterPro" id="IPR006008">
    <property type="entry name" value="YciB"/>
</dbReference>
<dbReference type="NCBIfam" id="TIGR00997">
    <property type="entry name" value="ispZ"/>
    <property type="match status" value="1"/>
</dbReference>
<dbReference type="NCBIfam" id="NF001324">
    <property type="entry name" value="PRK00259.1-2"/>
    <property type="match status" value="1"/>
</dbReference>
<dbReference type="NCBIfam" id="NF001325">
    <property type="entry name" value="PRK00259.1-3"/>
    <property type="match status" value="1"/>
</dbReference>
<dbReference type="NCBIfam" id="NF001326">
    <property type="entry name" value="PRK00259.1-4"/>
    <property type="match status" value="1"/>
</dbReference>
<dbReference type="PANTHER" id="PTHR36917:SF1">
    <property type="entry name" value="INNER MEMBRANE-SPANNING PROTEIN YCIB"/>
    <property type="match status" value="1"/>
</dbReference>
<dbReference type="PANTHER" id="PTHR36917">
    <property type="entry name" value="INTRACELLULAR SEPTATION PROTEIN A-RELATED"/>
    <property type="match status" value="1"/>
</dbReference>
<dbReference type="Pfam" id="PF04279">
    <property type="entry name" value="IspA"/>
    <property type="match status" value="1"/>
</dbReference>
<accession>C6DGY9</accession>
<gene>
    <name evidence="1" type="primary">yciB</name>
    <name type="ordered locus">PC1_1997</name>
</gene>
<comment type="function">
    <text evidence="1">Plays a role in cell envelope biogenesis, maintenance of cell envelope integrity and membrane homeostasis.</text>
</comment>
<comment type="subcellular location">
    <subcellularLocation>
        <location evidence="1">Cell inner membrane</location>
        <topology evidence="1">Multi-pass membrane protein</topology>
    </subcellularLocation>
</comment>
<comment type="similarity">
    <text evidence="1">Belongs to the YciB family.</text>
</comment>
<reference key="1">
    <citation type="submission" date="2009-07" db="EMBL/GenBank/DDBJ databases">
        <title>Complete sequence of Pectobacterium carotovorum subsp. carotovorum PC1.</title>
        <authorList>
            <consortium name="US DOE Joint Genome Institute"/>
            <person name="Lucas S."/>
            <person name="Copeland A."/>
            <person name="Lapidus A."/>
            <person name="Glavina del Rio T."/>
            <person name="Tice H."/>
            <person name="Bruce D."/>
            <person name="Goodwin L."/>
            <person name="Pitluck S."/>
            <person name="Munk A.C."/>
            <person name="Brettin T."/>
            <person name="Detter J.C."/>
            <person name="Han C."/>
            <person name="Tapia R."/>
            <person name="Larimer F."/>
            <person name="Land M."/>
            <person name="Hauser L."/>
            <person name="Kyrpides N."/>
            <person name="Mikhailova N."/>
            <person name="Balakrishnan V."/>
            <person name="Glasner J."/>
            <person name="Perna N.T."/>
        </authorList>
    </citation>
    <scope>NUCLEOTIDE SEQUENCE [LARGE SCALE GENOMIC DNA]</scope>
    <source>
        <strain>PC1</strain>
    </source>
</reference>
<evidence type="ECO:0000255" key="1">
    <source>
        <dbReference type="HAMAP-Rule" id="MF_00189"/>
    </source>
</evidence>